<organism>
    <name type="scientific">Red clover mottle virus</name>
    <name type="common">RCMV</name>
    <dbReference type="NCBI Taxonomy" id="12262"/>
    <lineage>
        <taxon>Viruses</taxon>
        <taxon>Riboviria</taxon>
        <taxon>Orthornavirae</taxon>
        <taxon>Pisuviricota</taxon>
        <taxon>Pisoniviricetes</taxon>
        <taxon>Picornavirales</taxon>
        <taxon>Secoviridae</taxon>
        <taxon>Comovirinae</taxon>
        <taxon>Comovirus</taxon>
        <taxon>Comovirus trifolii</taxon>
    </lineage>
</organism>
<sequence length="996" mass="109469">MLGISNLCRYYQGQRRVCANKFYQKYVNHSDLYFFDLWEISANNLWIKLAFVLLLCLFEIISGLEYLGKMAQEILKQGIPANVLQEKANLFKKASANNKIKDEMPNALSLYQNHSFFQKLKHLADKKNLDITSLPGGREVEYKHLDAGHLLADTNVVIDVPLVPQLAARTPTDYNFGTSRDKSATALHVGAIEVVIQSYASSECDLMAGMMLVDTFHSRPENAIRSVYIVPIRGGMFMRALCFPNTLVPMDSDINNRFKVVFSLPNNDFPQGSKLGHVSINMAGCTTSLSKTYVPSPLLTEELGREAATVIQYLGRDTYAMQTSNVPTSDEISRMVFNFHMEGKLSMHKTGSLSSILSKSKSLRYTIGGSKPKNKLADKAHNEEAETSDSKGIIDPKDGNVFANPQTDTDLFKLSLDDTSSPKGSLLDTRFAQKKVLIPKAMAGGADLLSSNLYDVLSGSSFRASLALARTHVVEGKIRCICTINLPENTGCCLAITVNSSNRGQFSTDIYTTGSQDRILWNPACSKNCDFSFNPNPCGTAWSLEFLRRTKFHLSVTCVSGWSAQPQTDIAMTMDWYVSNKPCVPCIYNVGTPGQNVWVNRWMGKLSFPQGSQNQLKQMPLAIGGGAGAKNSILMNMTNAFLSLWRYFHGDLVFEVQKMSSPFIKSTVTFFIGFGGLPFSENLEDFPNKLIQFGEVQERVEITFTRKEFLTAWSTQVDPAGPVAGDGCPYLCAMVHDSTASTITGDFNLGVTLLRIENFVGIGRNPGIQGARLLGSMQAEAQGGVVRTTDGVYSTCFRVRTPLALKDSGSFTCDLIGGGITTDSNTGWNLTALNTPVANLLRTAAWKRGTIHVQVAMFGSTVKRSDWTSTVQLFLRQSMNTSSYDARVWVISKPGAAILEFSFDVEGPNNGFEMWEANWASQTSWFLEFLISNVTQNTLFEVSMKLDSNFCVAGTTLMPPFSVTASPDSRPLLGVKTSTPAKKYVGGSLQAGPSPD</sequence>
<accession>P13561</accession>
<name>POL2_RCMV</name>
<feature type="chain" id="PRO_0000445850" description="RNA2 polyprotein">
    <location>
        <begin position="1"/>
        <end position="996"/>
    </location>
</feature>
<feature type="chain" id="PRO_0000445851" description="VP58">
    <location>
        <begin position="1"/>
        <end position="406"/>
    </location>
</feature>
<feature type="chain" id="PRO_0000037034" description="Movement protein">
    <location>
        <begin position="70"/>
        <end position="406"/>
    </location>
</feature>
<feature type="chain" id="PRO_0000037035" description="Large capsid protein">
    <location>
        <begin position="407"/>
        <end position="782"/>
    </location>
</feature>
<feature type="chain" id="PRO_0000037036" description="Small capsid protein precursor">
    <location>
        <begin position="783"/>
        <end position="996"/>
    </location>
</feature>
<feature type="chain" id="PRO_0000445852" description="Mature small capsid protein" evidence="1">
    <location>
        <begin position="783"/>
        <end position="972"/>
    </location>
</feature>
<feature type="chain" id="PRO_0000445853" description="Small capsid protein C-terminus part" evidence="1">
    <location>
        <begin position="973"/>
        <end position="994"/>
    </location>
</feature>
<feature type="region of interest" description="Involved in tubule formation by the movement protein" evidence="1">
    <location>
        <begin position="363"/>
        <end position="369"/>
    </location>
</feature>
<feature type="region of interest" description="Disordered" evidence="3">
    <location>
        <begin position="368"/>
        <end position="398"/>
    </location>
</feature>
<feature type="compositionally biased region" description="Basic and acidic residues" evidence="3">
    <location>
        <begin position="375"/>
        <end position="398"/>
    </location>
</feature>
<feature type="site" description="Cleavage; by viral protease" evidence="1">
    <location>
        <begin position="406"/>
        <end position="407"/>
    </location>
</feature>
<feature type="site" description="Interaction with the viral RNA" evidence="1">
    <location>
        <position position="423"/>
    </location>
</feature>
<feature type="site" description="Cleavage; by viral protease" evidence="1">
    <location>
        <begin position="782"/>
        <end position="783"/>
    </location>
</feature>
<feature type="site" description="Cleavage" evidence="1">
    <location>
        <begin position="972"/>
        <end position="973"/>
    </location>
</feature>
<feature type="splice variant" id="VSP_059981" description="In isoform 2.">
    <location>
        <begin position="1"/>
        <end position="69"/>
    </location>
</feature>
<protein>
    <recommendedName>
        <fullName>RNA2 polyprotein</fullName>
    </recommendedName>
    <alternativeName>
        <fullName>Genome polyprotein M</fullName>
    </alternativeName>
    <alternativeName>
        <fullName>M RNA polyprotein</fullName>
    </alternativeName>
    <alternativeName>
        <fullName>Middle component RNA polyprotein</fullName>
    </alternativeName>
    <alternativeName>
        <fullName>P2</fullName>
    </alternativeName>
    <component>
        <recommendedName>
            <fullName>VP58</fullName>
        </recommendedName>
    </component>
    <component>
        <recommendedName>
            <fullName>Movement protein</fullName>
            <shortName>MP</shortName>
        </recommendedName>
        <alternativeName>
            <fullName>43 kDa protein</fullName>
        </alternativeName>
    </component>
    <component>
        <recommendedName>
            <fullName>Large capsid protein</fullName>
            <shortName>LCP</shortName>
        </recommendedName>
        <alternativeName>
            <fullName>Coat protein VP40</fullName>
        </alternativeName>
        <alternativeName>
            <fullName>L subunit</fullName>
        </alternativeName>
        <alternativeName>
            <fullName>Large coat protein</fullName>
        </alternativeName>
    </component>
    <component>
        <recommendedName>
            <fullName>Small capsid protein precursor</fullName>
        </recommendedName>
        <alternativeName>
            <fullName>S subunit</fullName>
        </alternativeName>
    </component>
    <component>
        <recommendedName>
            <fullName>Mature small capsid protein</fullName>
            <shortName>SCP</shortName>
        </recommendedName>
        <alternativeName>
            <fullName>Coat protein VP22</fullName>
        </alternativeName>
        <alternativeName>
            <fullName>Small capsid protein, N-terminus part</fullName>
        </alternativeName>
        <alternativeName>
            <fullName>Small coat protein, N-terminus part</fullName>
        </alternativeName>
    </component>
    <component>
        <recommendedName>
            <fullName>Small capsid protein C-terminus part</fullName>
        </recommendedName>
        <alternativeName>
            <fullName>Small coat protein C-terminus part</fullName>
        </alternativeName>
    </component>
</protein>
<proteinExistence type="evidence at protein level"/>
<dbReference type="EMBL" id="M14913">
    <property type="protein sequence ID" value="AAA47230.1"/>
    <property type="molecule type" value="Genomic_RNA"/>
</dbReference>
<dbReference type="RefSeq" id="NP_620464.1">
    <molecule id="P13561-1"/>
    <property type="nucleotide sequence ID" value="NC_003738.1"/>
</dbReference>
<dbReference type="SMR" id="P13561"/>
<dbReference type="GeneID" id="1502335"/>
<dbReference type="KEGG" id="vg:1502335"/>
<dbReference type="OrthoDB" id="3029at10239"/>
<dbReference type="Proteomes" id="UP000006361">
    <property type="component" value="Genome"/>
</dbReference>
<dbReference type="GO" id="GO:0044219">
    <property type="term" value="C:host cell plasmodesma"/>
    <property type="evidence" value="ECO:0007669"/>
    <property type="project" value="UniProtKB-SubCell"/>
</dbReference>
<dbReference type="GO" id="GO:0039617">
    <property type="term" value="C:T=3 icosahedral viral capsid"/>
    <property type="evidence" value="ECO:0007669"/>
    <property type="project" value="UniProtKB-KW"/>
</dbReference>
<dbReference type="GO" id="GO:0003677">
    <property type="term" value="F:DNA binding"/>
    <property type="evidence" value="ECO:0007669"/>
    <property type="project" value="UniProtKB-KW"/>
</dbReference>
<dbReference type="GO" id="GO:0005525">
    <property type="term" value="F:GTP binding"/>
    <property type="evidence" value="ECO:0007669"/>
    <property type="project" value="UniProtKB-KW"/>
</dbReference>
<dbReference type="GO" id="GO:0003723">
    <property type="term" value="F:RNA binding"/>
    <property type="evidence" value="ECO:0007669"/>
    <property type="project" value="UniProtKB-KW"/>
</dbReference>
<dbReference type="GO" id="GO:0005198">
    <property type="term" value="F:structural molecule activity"/>
    <property type="evidence" value="ECO:0007669"/>
    <property type="project" value="InterPro"/>
</dbReference>
<dbReference type="GO" id="GO:0052170">
    <property type="term" value="P:symbiont-mediated suppression of host innate immune response"/>
    <property type="evidence" value="ECO:0007669"/>
    <property type="project" value="UniProtKB-KW"/>
</dbReference>
<dbReference type="GO" id="GO:0046740">
    <property type="term" value="P:transport of virus in host, cell to cell"/>
    <property type="evidence" value="ECO:0007669"/>
    <property type="project" value="UniProtKB-KW"/>
</dbReference>
<dbReference type="Gene3D" id="2.60.120.20">
    <property type="match status" value="2"/>
</dbReference>
<dbReference type="InterPro" id="IPR003181">
    <property type="entry name" value="Como_LCP"/>
</dbReference>
<dbReference type="InterPro" id="IPR003182">
    <property type="entry name" value="RNA2_polyprotein"/>
</dbReference>
<dbReference type="InterPro" id="IPR029053">
    <property type="entry name" value="Viral_coat"/>
</dbReference>
<dbReference type="Pfam" id="PF02247">
    <property type="entry name" value="Como_LCP"/>
    <property type="match status" value="1"/>
</dbReference>
<dbReference type="Pfam" id="PF02248">
    <property type="entry name" value="Como_SCP"/>
    <property type="match status" value="1"/>
</dbReference>
<dbReference type="SUPFAM" id="SSF88633">
    <property type="entry name" value="Positive stranded ssRNA viruses"/>
    <property type="match status" value="3"/>
</dbReference>
<evidence type="ECO:0000250" key="1">
    <source>
        <dbReference type="UniProtKB" id="P03599"/>
    </source>
</evidence>
<evidence type="ECO:0000250" key="2">
    <source>
        <dbReference type="UniProtKB" id="P23009"/>
    </source>
</evidence>
<evidence type="ECO:0000256" key="3">
    <source>
        <dbReference type="SAM" id="MobiDB-lite"/>
    </source>
</evidence>
<evidence type="ECO:0000269" key="4">
    <source>
    </source>
</evidence>
<evidence type="ECO:0000305" key="5"/>
<keyword id="KW-0024">Alternative initiation</keyword>
<keyword id="KW-0167">Capsid protein</keyword>
<keyword id="KW-0238">DNA-binding</keyword>
<keyword id="KW-0342">GTP-binding</keyword>
<keyword id="KW-1031">Host cell junction</keyword>
<keyword id="KW-0945">Host-virus interaction</keyword>
<keyword id="KW-1090">Inhibition of host innate immune response by virus</keyword>
<keyword id="KW-0547">Nucleotide-binding</keyword>
<keyword id="KW-0694">RNA-binding</keyword>
<keyword id="KW-0941">Suppressor of RNA silencing</keyword>
<keyword id="KW-1142">T=3 icosahedral capsid protein</keyword>
<keyword id="KW-0813">Transport</keyword>
<keyword id="KW-0899">Viral immunoevasion</keyword>
<keyword id="KW-0916">Viral movement protein</keyword>
<keyword id="KW-0946">Virion</keyword>
<comment type="function">
    <molecule>VP58</molecule>
    <text evidence="2">Responsible for viral RNA2 accumulation. May function by recruiting the RNA1-encoded polyprotein that contains the replication protein to RNA2 and enable its replication.</text>
</comment>
<comment type="function">
    <molecule>Movement protein</molecule>
    <text evidence="1">Transports the viral genome to neighboring plant cells directly through plasmosdesmata, without any budding. The movement protein allows efficient cell to cell propagation, by bypassing the host cell wall barrier. Acts by forming a tubular structure at the host plasmodesmata, enlarging it enough to allow free passage of virion capsids. Binds to GTP and to single-stranded RNA and single-stranded DNA in a non-sequence-specific manner.</text>
</comment>
<comment type="function">
    <molecule>Large capsid protein</molecule>
    <text evidence="1">Together with the mature small capsid protein, forms an icosahedral capsid (T=3) enclosing the viral positive strand RNA genome, with a diameter of approximately 300 Angstroms. The capsid is formed from 60 copies each of the large and the mature small capsid protein. The large capsid protein interacts with the viral RNA.</text>
</comment>
<comment type="function">
    <molecule>Mature small capsid protein</molecule>
    <text evidence="1">Together with the large capsid protein, forms an icosahedral capsid (T=3) enclosing the viral positive strand RNA genome, with a diameter of approximately 300 Angstroms. The capsid is formed from 60 copies each of the large and the mature small capsid protein. The mature small capsid protein forms the turrets at the fivefold axes of the viral particle.</text>
</comment>
<comment type="subunit">
    <molecule>Mature small capsid protein</molecule>
    <text evidence="1">Interacts with the large capsid protein.</text>
</comment>
<comment type="subunit">
    <molecule>Large capsid protein</molecule>
    <text evidence="1">Interacts with the small capsid protein. Homomultimer; assembles as pentons. Interacts with the movement protein (via C-terminus).</text>
</comment>
<comment type="subunit">
    <molecule>Movement protein</molecule>
    <text evidence="1">Interacts (via C-terminus) with the large capsid protein.</text>
</comment>
<comment type="subcellular location">
    <molecule>Movement protein</molecule>
    <subcellularLocation>
        <location evidence="4">Host cell junction</location>
        <location evidence="4">Host plasmodesma</location>
    </subcellularLocation>
    <text evidence="4">Assembles in tubules that are embedded within modified plasmodesmata.</text>
</comment>
<comment type="subcellular location">
    <molecule>Large capsid protein</molecule>
    <subcellularLocation>
        <location evidence="1">Virion</location>
    </subcellularLocation>
</comment>
<comment type="subcellular location">
    <molecule>Mature small capsid protein</molecule>
    <subcellularLocation>
        <location evidence="1">Virion</location>
    </subcellularLocation>
</comment>
<comment type="alternative products">
    <event type="alternative initiation"/>
    <isoform>
        <id>P13561-1</id>
        <name>1</name>
        <name>RNA2 polyprotein</name>
        <name>109 kDa protein</name>
        <sequence type="displayed"/>
    </isoform>
    <isoform>
        <id>P13561-2</id>
        <name>2</name>
        <name>101 kDa protein</name>
        <sequence type="described" ref="VSP_059981"/>
    </isoform>
</comment>
<comment type="domain">
    <molecule>Large capsid protein</molecule>
    <text evidence="1">Contains a beta-sheet structure called beta-barrel jelly roll.</text>
</comment>
<comment type="domain">
    <molecule>Mature small capsid protein</molecule>
    <text evidence="1">Contains a beta-sheet structure called beta-barrel jelly roll.</text>
</comment>
<comment type="domain">
    <molecule>Movement protein</molecule>
    <text evidence="1">The C-terminus is involved in binding to the large capsid protein, and hence to the virion.</text>
</comment>
<comment type="PTM">
    <molecule>RNA2 polyprotein</molecule>
    <text evidence="1">Specific enzymatic cleavages by picornain 3C-like protease in vivo yield mature proteins.</text>
</comment>
<comment type="caution">
    <text evidence="5">It is uncertain whether Met-1 or Met-70 is the initiator.</text>
</comment>
<organismHost>
    <name type="scientific">Trifolium pratense</name>
    <name type="common">Red clover</name>
    <dbReference type="NCBI Taxonomy" id="57577"/>
</organismHost>
<reference key="1">
    <citation type="journal article" date="1986" name="Virology">
        <title>The primary structure of red clover mottle virus middle component RNA.</title>
        <authorList>
            <person name="Shanks M."/>
            <person name="Stanley J."/>
            <person name="Lomonossoff G.P."/>
        </authorList>
    </citation>
    <scope>NUCLEOTIDE SEQUENCE [GENOMIC RNA]</scope>
    <scope>ALTERNATIVE INITIATION</scope>
    <scope>PROTEOLYTIC CLEAVAGE (RNA2 POLYPROTEIN)</scope>
    <source>
        <strain>S</strain>
    </source>
</reference>
<reference key="2">
    <citation type="journal article" date="1989" name="Virology">
        <title>Identification and subcellular localization of a putative cell-to-cell transport protein from red clover mottle virus.</title>
        <authorList>
            <person name="Shanks M."/>
            <person name="Tomenius K."/>
            <person name="Clapham D."/>
            <person name="Huskisson N.S."/>
            <person name="Barker P.J."/>
            <person name="Wilson I.G."/>
            <person name="Maule A.J."/>
            <person name="Lomonossoff G.P."/>
        </authorList>
    </citation>
    <scope>SUBCELLULAR LOCATION (MOVEMENT PROTEIN)</scope>
    <scope>IDENTIFICATION (MOVEMENT PROTEIN)</scope>
    <source>
        <strain>S</strain>
    </source>
</reference>